<sequence>MLSVVKPLQEFGKLDKCLSRYGTRFEFNNEKQVIFSSDVNNEDTFVILEGVISLRREENVLIGITQAPYIMGLADGLMKNDIPYKLISEGNCTGYHLPAKQTITLIEQNQLWRDAFYWLAWQNRILELRDVQLIGHNSYEQIRATLLSMIDWNEELRSRIGVMNYIHQRTRISRSVVAEVLAALRKGGYIEMNKGKLVAINRLPSEY</sequence>
<feature type="chain" id="PRO_0000168596" description="Inhibitor of hydrogen peroxide resistance">
    <location>
        <begin position="1"/>
        <end position="207"/>
    </location>
</feature>
<feature type="DNA-binding region" description="H-T-H motif" evidence="1">
    <location>
        <begin position="163"/>
        <end position="182"/>
    </location>
</feature>
<protein>
    <recommendedName>
        <fullName evidence="1">Inhibitor of hydrogen peroxide resistance</fullName>
    </recommendedName>
</protein>
<gene>
    <name evidence="1" type="primary">iprA</name>
    <name type="synonym">yaiV</name>
    <name type="ordered locus">b0375</name>
    <name type="ordered locus">JW0366</name>
</gene>
<comment type="function">
    <text evidence="1">Involved in oxidative stress resistance.</text>
</comment>
<comment type="disruption phenotype">
    <text evidence="2">Deletion mutants display increased resistance to oxidative stress and increased catalase activity.</text>
</comment>
<comment type="similarity">
    <text evidence="1">Belongs to the IprA family.</text>
</comment>
<comment type="sequence caution" evidence="3">
    <conflict type="erroneous initiation">
        <sequence resource="EMBL-CDS" id="AAB18098"/>
    </conflict>
</comment>
<comment type="sequence caution" evidence="3">
    <conflict type="erroneous initiation">
        <sequence resource="EMBL-CDS" id="BAE76156"/>
    </conflict>
</comment>
<organism>
    <name type="scientific">Escherichia coli (strain K12)</name>
    <dbReference type="NCBI Taxonomy" id="83333"/>
    <lineage>
        <taxon>Bacteria</taxon>
        <taxon>Pseudomonadati</taxon>
        <taxon>Pseudomonadota</taxon>
        <taxon>Gammaproteobacteria</taxon>
        <taxon>Enterobacterales</taxon>
        <taxon>Enterobacteriaceae</taxon>
        <taxon>Escherichia</taxon>
    </lineage>
</organism>
<keyword id="KW-1185">Reference proteome</keyword>
<keyword id="KW-0346">Stress response</keyword>
<accession>P0AAP5</accession>
<accession>P77723</accession>
<accession>Q2MC50</accession>
<reference key="1">
    <citation type="submission" date="1997-01" db="EMBL/GenBank/DDBJ databases">
        <title>Sequence of minutes 4-25 of Escherichia coli.</title>
        <authorList>
            <person name="Chung E."/>
            <person name="Allen E."/>
            <person name="Araujo R."/>
            <person name="Aparicio A.M."/>
            <person name="Davis K."/>
            <person name="Duncan M."/>
            <person name="Federspiel N."/>
            <person name="Hyman R."/>
            <person name="Kalman S."/>
            <person name="Komp C."/>
            <person name="Kurdi O."/>
            <person name="Lew H."/>
            <person name="Lin D."/>
            <person name="Namath A."/>
            <person name="Oefner P."/>
            <person name="Roberts D."/>
            <person name="Schramm S."/>
            <person name="Davis R.W."/>
        </authorList>
    </citation>
    <scope>NUCLEOTIDE SEQUENCE [LARGE SCALE GENOMIC DNA]</scope>
    <source>
        <strain>K12 / MG1655 / ATCC 47076</strain>
    </source>
</reference>
<reference key="2">
    <citation type="journal article" date="1997" name="Science">
        <title>The complete genome sequence of Escherichia coli K-12.</title>
        <authorList>
            <person name="Blattner F.R."/>
            <person name="Plunkett G. III"/>
            <person name="Bloch C.A."/>
            <person name="Perna N.T."/>
            <person name="Burland V."/>
            <person name="Riley M."/>
            <person name="Collado-Vides J."/>
            <person name="Glasner J.D."/>
            <person name="Rode C.K."/>
            <person name="Mayhew G.F."/>
            <person name="Gregor J."/>
            <person name="Davis N.W."/>
            <person name="Kirkpatrick H.A."/>
            <person name="Goeden M.A."/>
            <person name="Rose D.J."/>
            <person name="Mau B."/>
            <person name="Shao Y."/>
        </authorList>
    </citation>
    <scope>NUCLEOTIDE SEQUENCE [LARGE SCALE GENOMIC DNA]</scope>
    <source>
        <strain>K12 / MG1655 / ATCC 47076</strain>
    </source>
</reference>
<reference key="3">
    <citation type="journal article" date="2006" name="Mol. Syst. Biol.">
        <title>Highly accurate genome sequences of Escherichia coli K-12 strains MG1655 and W3110.</title>
        <authorList>
            <person name="Hayashi K."/>
            <person name="Morooka N."/>
            <person name="Yamamoto Y."/>
            <person name="Fujita K."/>
            <person name="Isono K."/>
            <person name="Choi S."/>
            <person name="Ohtsubo E."/>
            <person name="Baba T."/>
            <person name="Wanner B.L."/>
            <person name="Mori H."/>
            <person name="Horiuchi T."/>
        </authorList>
    </citation>
    <scope>NUCLEOTIDE SEQUENCE [LARGE SCALE GENOMIC DNA]</scope>
    <source>
        <strain>K12 / W3110 / ATCC 27325 / DSM 5911</strain>
    </source>
</reference>
<reference key="4">
    <citation type="journal article" date="2016" name="J. Bacteriol.">
        <title>The bacterial iprA gene is conserved across Enterobacteriaceae, is involved in oxidative stress resistance, and influences gene expression in Salmonella enterica serovar typhimurium.</title>
        <authorList>
            <person name="Herman A."/>
            <person name="Serfecz J."/>
            <person name="Kinnally A."/>
            <person name="Crosby K."/>
            <person name="Youngman M."/>
            <person name="Wykoff D."/>
            <person name="Wilson J.W."/>
        </authorList>
    </citation>
    <scope>DISRUPTION PHENOTYPE</scope>
</reference>
<dbReference type="EMBL" id="U73857">
    <property type="protein sequence ID" value="AAB18098.1"/>
    <property type="status" value="ALT_INIT"/>
    <property type="molecule type" value="Genomic_DNA"/>
</dbReference>
<dbReference type="EMBL" id="U00096">
    <property type="protein sequence ID" value="AAC73478.2"/>
    <property type="molecule type" value="Genomic_DNA"/>
</dbReference>
<dbReference type="EMBL" id="AP009048">
    <property type="protein sequence ID" value="BAE76156.1"/>
    <property type="status" value="ALT_INIT"/>
    <property type="molecule type" value="Genomic_DNA"/>
</dbReference>
<dbReference type="PIR" id="G64765">
    <property type="entry name" value="G64765"/>
</dbReference>
<dbReference type="RefSeq" id="NP_414909.2">
    <property type="nucleotide sequence ID" value="NC_000913.3"/>
</dbReference>
<dbReference type="RefSeq" id="WP_001295335.1">
    <property type="nucleotide sequence ID" value="NZ_STEB01000007.1"/>
</dbReference>
<dbReference type="SMR" id="P0AAP5"/>
<dbReference type="BioGRID" id="4259481">
    <property type="interactions" value="156"/>
</dbReference>
<dbReference type="FunCoup" id="P0AAP5">
    <property type="interactions" value="18"/>
</dbReference>
<dbReference type="IntAct" id="P0AAP5">
    <property type="interactions" value="3"/>
</dbReference>
<dbReference type="STRING" id="511145.b0375"/>
<dbReference type="PaxDb" id="511145-b0375"/>
<dbReference type="EnsemblBacteria" id="AAC73478">
    <property type="protein sequence ID" value="AAC73478"/>
    <property type="gene ID" value="b0375"/>
</dbReference>
<dbReference type="GeneID" id="93777087"/>
<dbReference type="GeneID" id="946902"/>
<dbReference type="KEGG" id="ecj:JW0366"/>
<dbReference type="KEGG" id="eco:b0375"/>
<dbReference type="PATRIC" id="fig|1411691.4.peg.1904"/>
<dbReference type="EchoBASE" id="EB3374"/>
<dbReference type="eggNOG" id="COG0664">
    <property type="taxonomic scope" value="Bacteria"/>
</dbReference>
<dbReference type="HOGENOM" id="CLU_080453_0_0_6"/>
<dbReference type="InParanoid" id="P0AAP5"/>
<dbReference type="OrthoDB" id="6504476at2"/>
<dbReference type="PhylomeDB" id="P0AAP5"/>
<dbReference type="BioCyc" id="EcoCyc:G6226-MONOMER"/>
<dbReference type="PRO" id="PR:P0AAP5"/>
<dbReference type="Proteomes" id="UP000000625">
    <property type="component" value="Chromosome"/>
</dbReference>
<dbReference type="GO" id="GO:0006979">
    <property type="term" value="P:response to oxidative stress"/>
    <property type="evidence" value="ECO:0007669"/>
    <property type="project" value="UniProtKB-UniRule"/>
</dbReference>
<dbReference type="Gene3D" id="2.60.120.10">
    <property type="entry name" value="Jelly Rolls"/>
    <property type="match status" value="1"/>
</dbReference>
<dbReference type="HAMAP" id="MF_02072">
    <property type="entry name" value="IprA"/>
    <property type="match status" value="1"/>
</dbReference>
<dbReference type="InterPro" id="IPR018490">
    <property type="entry name" value="cNMP-bd_dom_sf"/>
</dbReference>
<dbReference type="InterPro" id="IPR041687">
    <property type="entry name" value="HTH_46"/>
</dbReference>
<dbReference type="InterPro" id="IPR034719">
    <property type="entry name" value="IprA"/>
</dbReference>
<dbReference type="InterPro" id="IPR014710">
    <property type="entry name" value="RmlC-like_jellyroll"/>
</dbReference>
<dbReference type="NCBIfam" id="NF008810">
    <property type="entry name" value="PRK11832.1"/>
    <property type="match status" value="1"/>
</dbReference>
<dbReference type="Pfam" id="PF15977">
    <property type="entry name" value="HTH_46"/>
    <property type="match status" value="1"/>
</dbReference>
<dbReference type="SUPFAM" id="SSF51206">
    <property type="entry name" value="cAMP-binding domain-like"/>
    <property type="match status" value="1"/>
</dbReference>
<proteinExistence type="inferred from homology"/>
<evidence type="ECO:0000255" key="1">
    <source>
        <dbReference type="HAMAP-Rule" id="MF_02072"/>
    </source>
</evidence>
<evidence type="ECO:0000269" key="2">
    <source>
    </source>
</evidence>
<evidence type="ECO:0000305" key="3"/>
<name>IPRA_ECOLI</name>